<proteinExistence type="inferred from homology"/>
<organism>
    <name type="scientific">Trichoplax adhaerens</name>
    <name type="common">Trichoplax reptans</name>
    <dbReference type="NCBI Taxonomy" id="10228"/>
    <lineage>
        <taxon>Eukaryota</taxon>
        <taxon>Metazoa</taxon>
        <taxon>Placozoa</taxon>
        <taxon>Uniplacotomia</taxon>
        <taxon>Trichoplacea</taxon>
        <taxon>Trichoplacidae</taxon>
        <taxon>Trichoplax</taxon>
    </lineage>
</organism>
<keyword id="KW-0342">GTP-binding</keyword>
<keyword id="KW-0378">Hydrolase</keyword>
<keyword id="KW-0472">Membrane</keyword>
<keyword id="KW-0496">Mitochondrion</keyword>
<keyword id="KW-0999">Mitochondrion inner membrane</keyword>
<keyword id="KW-0547">Nucleotide-binding</keyword>
<keyword id="KW-0648">Protein biosynthesis</keyword>
<keyword id="KW-1185">Reference proteome</keyword>
<feature type="chain" id="PRO_0000402911" description="Translation factor GUF1 homolog, mitochondrial">
    <location>
        <begin position="1"/>
        <end position="660"/>
    </location>
</feature>
<feature type="domain" description="tr-type G">
    <location>
        <begin position="62"/>
        <end position="243"/>
    </location>
</feature>
<feature type="binding site" evidence="1">
    <location>
        <begin position="71"/>
        <end position="78"/>
    </location>
    <ligand>
        <name>GTP</name>
        <dbReference type="ChEBI" id="CHEBI:37565"/>
    </ligand>
</feature>
<feature type="binding site" evidence="1">
    <location>
        <begin position="136"/>
        <end position="140"/>
    </location>
    <ligand>
        <name>GTP</name>
        <dbReference type="ChEBI" id="CHEBI:37565"/>
    </ligand>
</feature>
<feature type="binding site" evidence="1">
    <location>
        <begin position="190"/>
        <end position="193"/>
    </location>
    <ligand>
        <name>GTP</name>
        <dbReference type="ChEBI" id="CHEBI:37565"/>
    </ligand>
</feature>
<evidence type="ECO:0000255" key="1">
    <source>
        <dbReference type="HAMAP-Rule" id="MF_03137"/>
    </source>
</evidence>
<evidence type="ECO:0000305" key="2"/>
<gene>
    <name type="ORF">TRIADDRAFT_56304</name>
</gene>
<name>GUF1_TRIAD</name>
<sequence>MTLNLRCKVVEPSWKVLQHYASYVRNTAAVSLVRHHARLSTSTNLTSKAAEPITALSEFPVEKIRNFSIIAHIDHGKSTLADRLLEIAGVIPKSAENKQVLDKLQVERERGITVKAQTASMLYEYHGETYLLNLIDTPGHVDFNYEVSRSLAACQGVLLVVDASQGVQAQTVANFFLAFEADLKIIPVLNKIDMKSANPDRIANQLQRVFDIEPEETMKVSAKDGTGIDQLLPTIIEKIPPPTCDQQKPLKALLFDSWYDRYRGVIGLLAIKDGKLTKGEKIQSAFSKKQYEILDLGILYPNEKSTKTLGSGQVGFIVAGMKSTKEAQIGDTFCHVNCPVDALPGFKPAKSMVYAGLFPFNKSEFEVLRSAIHKLTLNDSSVSVHNDNSAALGPGFRLGFLGLLHMDVFNQRLEQEYDVSVVITSPNVPFKGKYRYASILRKEHEEMVITTPSQFPDIAQVVEYLEPVVMGTIIFPDKYMGKMLNLCQSKRGQQVNISYIDETRVMLKYILPLHEIVIDFYDQLKSLTSGYASFDYEDHGYRSATLAKMEILLNGTPVDALTTVVHEEKARITGKQVCQKLKEAIPRQLYEVAIQATIRGKVVARETIRAVRKDVTAKCYGGDITRKLKLLKRQKEGKSRLKMIGKIEVPKEAFLAVLKR</sequence>
<accession>B3RXR7</accession>
<protein>
    <recommendedName>
        <fullName evidence="1">Translation factor GUF1 homolog, mitochondrial</fullName>
        <ecNumber>3.6.5.-</ecNumber>
    </recommendedName>
    <alternativeName>
        <fullName evidence="1">Elongation factor 4 homolog</fullName>
        <shortName evidence="1">EF-4</shortName>
    </alternativeName>
    <alternativeName>
        <fullName evidence="1">GTPase GUF1 homolog</fullName>
    </alternativeName>
    <alternativeName>
        <fullName evidence="1">Ribosomal back-translocase</fullName>
    </alternativeName>
</protein>
<comment type="function">
    <text evidence="1">Promotes mitochondrial protein synthesis. May act as a fidelity factor of the translation reaction, by catalyzing a one-codon backward translocation of tRNAs on improperly translocated ribosomes. Binds to mitochondrial ribosomes in a GTP-dependent manner.</text>
</comment>
<comment type="catalytic activity">
    <reaction evidence="1">
        <text>GTP + H2O = GDP + phosphate + H(+)</text>
        <dbReference type="Rhea" id="RHEA:19669"/>
        <dbReference type="ChEBI" id="CHEBI:15377"/>
        <dbReference type="ChEBI" id="CHEBI:15378"/>
        <dbReference type="ChEBI" id="CHEBI:37565"/>
        <dbReference type="ChEBI" id="CHEBI:43474"/>
        <dbReference type="ChEBI" id="CHEBI:58189"/>
    </reaction>
</comment>
<comment type="subcellular location">
    <subcellularLocation>
        <location evidence="1">Mitochondrion inner membrane</location>
        <topology evidence="1">Peripheral membrane protein</topology>
        <orientation evidence="1">Matrix side</orientation>
    </subcellularLocation>
</comment>
<comment type="miscellaneous">
    <text evidence="1">This protein may be expected to contain an N-terminal transit peptide but none has been predicted.</text>
</comment>
<comment type="similarity">
    <text evidence="2">Belongs to the TRAFAC class translation factor GTPase superfamily. Classic translation factor GTPase family. LepA subfamily.</text>
</comment>
<dbReference type="EC" id="3.6.5.-"/>
<dbReference type="EMBL" id="DS985245">
    <property type="protein sequence ID" value="EDV24904.1"/>
    <property type="molecule type" value="Genomic_DNA"/>
</dbReference>
<dbReference type="RefSeq" id="XP_002112794.1">
    <property type="nucleotide sequence ID" value="XM_002112758.1"/>
</dbReference>
<dbReference type="SMR" id="B3RXR7"/>
<dbReference type="FunCoup" id="B3RXR7">
    <property type="interactions" value="1672"/>
</dbReference>
<dbReference type="STRING" id="10228.B3RXR7"/>
<dbReference type="EnsemblMetazoa" id="TriadT56304">
    <property type="protein sequence ID" value="TriadP56304"/>
    <property type="gene ID" value="TriadG56304"/>
</dbReference>
<dbReference type="GeneID" id="6753580"/>
<dbReference type="KEGG" id="tad:TRIADDRAFT_56304"/>
<dbReference type="CTD" id="6753580"/>
<dbReference type="eggNOG" id="KOG0462">
    <property type="taxonomic scope" value="Eukaryota"/>
</dbReference>
<dbReference type="HOGENOM" id="CLU_009995_3_3_1"/>
<dbReference type="InParanoid" id="B3RXR7"/>
<dbReference type="OMA" id="QVKCDEN"/>
<dbReference type="OrthoDB" id="10044244at2759"/>
<dbReference type="PhylomeDB" id="B3RXR7"/>
<dbReference type="Proteomes" id="UP000009022">
    <property type="component" value="Unassembled WGS sequence"/>
</dbReference>
<dbReference type="GO" id="GO:0005743">
    <property type="term" value="C:mitochondrial inner membrane"/>
    <property type="evidence" value="ECO:0007669"/>
    <property type="project" value="UniProtKB-SubCell"/>
</dbReference>
<dbReference type="GO" id="GO:0005759">
    <property type="term" value="C:mitochondrial matrix"/>
    <property type="evidence" value="ECO:0007669"/>
    <property type="project" value="UniProtKB-UniRule"/>
</dbReference>
<dbReference type="GO" id="GO:0005739">
    <property type="term" value="C:mitochondrion"/>
    <property type="evidence" value="ECO:0000318"/>
    <property type="project" value="GO_Central"/>
</dbReference>
<dbReference type="GO" id="GO:0005525">
    <property type="term" value="F:GTP binding"/>
    <property type="evidence" value="ECO:0007669"/>
    <property type="project" value="UniProtKB-UniRule"/>
</dbReference>
<dbReference type="GO" id="GO:0003924">
    <property type="term" value="F:GTPase activity"/>
    <property type="evidence" value="ECO:0007669"/>
    <property type="project" value="UniProtKB-UniRule"/>
</dbReference>
<dbReference type="GO" id="GO:0097177">
    <property type="term" value="F:mitochondrial ribosome binding"/>
    <property type="evidence" value="ECO:0000318"/>
    <property type="project" value="GO_Central"/>
</dbReference>
<dbReference type="GO" id="GO:0045727">
    <property type="term" value="P:positive regulation of translation"/>
    <property type="evidence" value="ECO:0000318"/>
    <property type="project" value="GO_Central"/>
</dbReference>
<dbReference type="GO" id="GO:0006412">
    <property type="term" value="P:translation"/>
    <property type="evidence" value="ECO:0007669"/>
    <property type="project" value="UniProtKB-KW"/>
</dbReference>
<dbReference type="CDD" id="cd03699">
    <property type="entry name" value="EF4_II"/>
    <property type="match status" value="1"/>
</dbReference>
<dbReference type="CDD" id="cd16260">
    <property type="entry name" value="EF4_III"/>
    <property type="match status" value="1"/>
</dbReference>
<dbReference type="CDD" id="cd01890">
    <property type="entry name" value="LepA"/>
    <property type="match status" value="1"/>
</dbReference>
<dbReference type="CDD" id="cd03709">
    <property type="entry name" value="lepA_C"/>
    <property type="match status" value="1"/>
</dbReference>
<dbReference type="FunFam" id="3.40.50.300:FF:000078">
    <property type="entry name" value="Elongation factor 4"/>
    <property type="match status" value="1"/>
</dbReference>
<dbReference type="FunFam" id="2.40.30.10:FF:000015">
    <property type="entry name" value="Translation factor GUF1, mitochondrial"/>
    <property type="match status" value="1"/>
</dbReference>
<dbReference type="FunFam" id="3.30.70.240:FF:000007">
    <property type="entry name" value="Translation factor GUF1, mitochondrial"/>
    <property type="match status" value="1"/>
</dbReference>
<dbReference type="FunFam" id="3.30.70.2570:FF:000001">
    <property type="entry name" value="Translation factor GUF1, mitochondrial"/>
    <property type="match status" value="1"/>
</dbReference>
<dbReference type="FunFam" id="3.30.70.870:FF:000004">
    <property type="entry name" value="Translation factor GUF1, mitochondrial"/>
    <property type="match status" value="1"/>
</dbReference>
<dbReference type="Gene3D" id="3.30.70.240">
    <property type="match status" value="1"/>
</dbReference>
<dbReference type="Gene3D" id="3.30.70.2570">
    <property type="entry name" value="Elongation factor 4, C-terminal domain"/>
    <property type="match status" value="1"/>
</dbReference>
<dbReference type="Gene3D" id="3.30.70.870">
    <property type="entry name" value="Elongation Factor G (Translational Gtpase), domain 3"/>
    <property type="match status" value="1"/>
</dbReference>
<dbReference type="Gene3D" id="3.40.50.300">
    <property type="entry name" value="P-loop containing nucleotide triphosphate hydrolases"/>
    <property type="match status" value="1"/>
</dbReference>
<dbReference type="Gene3D" id="2.40.30.10">
    <property type="entry name" value="Translation factors"/>
    <property type="match status" value="1"/>
</dbReference>
<dbReference type="HAMAP" id="MF_00071">
    <property type="entry name" value="LepA"/>
    <property type="match status" value="1"/>
</dbReference>
<dbReference type="InterPro" id="IPR006297">
    <property type="entry name" value="EF-4"/>
</dbReference>
<dbReference type="InterPro" id="IPR035647">
    <property type="entry name" value="EFG_III/V"/>
</dbReference>
<dbReference type="InterPro" id="IPR000640">
    <property type="entry name" value="EFG_V-like"/>
</dbReference>
<dbReference type="InterPro" id="IPR031157">
    <property type="entry name" value="G_TR_CS"/>
</dbReference>
<dbReference type="InterPro" id="IPR038363">
    <property type="entry name" value="LepA_C_sf"/>
</dbReference>
<dbReference type="InterPro" id="IPR013842">
    <property type="entry name" value="LepA_CTD"/>
</dbReference>
<dbReference type="InterPro" id="IPR035654">
    <property type="entry name" value="LepA_IV"/>
</dbReference>
<dbReference type="InterPro" id="IPR027417">
    <property type="entry name" value="P-loop_NTPase"/>
</dbReference>
<dbReference type="InterPro" id="IPR005225">
    <property type="entry name" value="Small_GTP-bd"/>
</dbReference>
<dbReference type="InterPro" id="IPR000795">
    <property type="entry name" value="T_Tr_GTP-bd_dom"/>
</dbReference>
<dbReference type="InterPro" id="IPR009000">
    <property type="entry name" value="Transl_B-barrel_sf"/>
</dbReference>
<dbReference type="NCBIfam" id="TIGR01393">
    <property type="entry name" value="lepA"/>
    <property type="match status" value="1"/>
</dbReference>
<dbReference type="NCBIfam" id="TIGR00231">
    <property type="entry name" value="small_GTP"/>
    <property type="match status" value="1"/>
</dbReference>
<dbReference type="PANTHER" id="PTHR43512:SF7">
    <property type="entry name" value="TRANSLATION FACTOR GUF1, MITOCHONDRIAL"/>
    <property type="match status" value="1"/>
</dbReference>
<dbReference type="PANTHER" id="PTHR43512">
    <property type="entry name" value="TRANSLATION FACTOR GUF1-RELATED"/>
    <property type="match status" value="1"/>
</dbReference>
<dbReference type="Pfam" id="PF00679">
    <property type="entry name" value="EFG_C"/>
    <property type="match status" value="1"/>
</dbReference>
<dbReference type="Pfam" id="PF00009">
    <property type="entry name" value="GTP_EFTU"/>
    <property type="match status" value="1"/>
</dbReference>
<dbReference type="Pfam" id="PF06421">
    <property type="entry name" value="LepA_C"/>
    <property type="match status" value="1"/>
</dbReference>
<dbReference type="PRINTS" id="PR00315">
    <property type="entry name" value="ELONGATNFCT"/>
</dbReference>
<dbReference type="SUPFAM" id="SSF54980">
    <property type="entry name" value="EF-G C-terminal domain-like"/>
    <property type="match status" value="2"/>
</dbReference>
<dbReference type="SUPFAM" id="SSF52540">
    <property type="entry name" value="P-loop containing nucleoside triphosphate hydrolases"/>
    <property type="match status" value="1"/>
</dbReference>
<dbReference type="SUPFAM" id="SSF50447">
    <property type="entry name" value="Translation proteins"/>
    <property type="match status" value="1"/>
</dbReference>
<dbReference type="PROSITE" id="PS00301">
    <property type="entry name" value="G_TR_1"/>
    <property type="match status" value="1"/>
</dbReference>
<dbReference type="PROSITE" id="PS51722">
    <property type="entry name" value="G_TR_2"/>
    <property type="match status" value="1"/>
</dbReference>
<reference key="1">
    <citation type="journal article" date="2008" name="Nature">
        <title>The Trichoplax genome and the nature of placozoans.</title>
        <authorList>
            <person name="Srivastava M."/>
            <person name="Begovic E."/>
            <person name="Chapman J."/>
            <person name="Putnam N.H."/>
            <person name="Hellsten U."/>
            <person name="Kawashima T."/>
            <person name="Kuo A."/>
            <person name="Mitros T."/>
            <person name="Salamov A."/>
            <person name="Carpenter M.L."/>
            <person name="Signorovitch A.Y."/>
            <person name="Moreno M.A."/>
            <person name="Kamm K."/>
            <person name="Grimwood J."/>
            <person name="Schmutz J."/>
            <person name="Shapiro H."/>
            <person name="Grigoriev I.V."/>
            <person name="Buss L.W."/>
            <person name="Schierwater B."/>
            <person name="Dellaporta S.L."/>
            <person name="Rokhsar D.S."/>
        </authorList>
    </citation>
    <scope>NUCLEOTIDE SEQUENCE [LARGE SCALE GENOMIC DNA]</scope>
    <source>
        <strain>Grell-BS-1999</strain>
    </source>
</reference>